<accession>A0T0F8</accession>
<evidence type="ECO:0000255" key="1">
    <source>
        <dbReference type="HAMAP-Rule" id="MF_01217"/>
    </source>
</evidence>
<evidence type="ECO:0000255" key="2">
    <source>
        <dbReference type="PROSITE-ProRule" id="PRU00258"/>
    </source>
</evidence>
<gene>
    <name evidence="1" type="primary">acpP</name>
</gene>
<comment type="function">
    <text evidence="1">Carrier of the growing fatty acid chain in fatty acid biosynthesis.</text>
</comment>
<comment type="pathway">
    <text evidence="1">Lipid metabolism; fatty acid biosynthesis.</text>
</comment>
<comment type="subcellular location">
    <subcellularLocation>
        <location>Plastid</location>
        <location>Chloroplast</location>
    </subcellularLocation>
</comment>
<comment type="PTM">
    <text evidence="1">4'-phosphopantetheine is transferred from CoA to a specific serine of apo-ACP by AcpS. This modification is essential for activity because fatty acids are bound in thioester linkage to the sulfhydryl of the prosthetic group.</text>
</comment>
<comment type="similarity">
    <text evidence="1">Belongs to the acyl carrier protein (ACP) family.</text>
</comment>
<sequence length="76" mass="8516">MKDNFTRLQSIVGKQLGIDPSKVKLESDFGRELGADSLDVVELVMAIEDEFEVNIEDQSASQIATVQDVLNYLERN</sequence>
<geneLocation type="chloroplast"/>
<proteinExistence type="inferred from homology"/>
<organism>
    <name type="scientific">Phaeodactylum tricornutum (strain CCAP 1055/1)</name>
    <dbReference type="NCBI Taxonomy" id="556484"/>
    <lineage>
        <taxon>Eukaryota</taxon>
        <taxon>Sar</taxon>
        <taxon>Stramenopiles</taxon>
        <taxon>Ochrophyta</taxon>
        <taxon>Bacillariophyta</taxon>
        <taxon>Bacillariophyceae</taxon>
        <taxon>Bacillariophycidae</taxon>
        <taxon>Naviculales</taxon>
        <taxon>Phaeodactylaceae</taxon>
        <taxon>Phaeodactylum</taxon>
    </lineage>
</organism>
<name>ACP_PHATC</name>
<keyword id="KW-0150">Chloroplast</keyword>
<keyword id="KW-0275">Fatty acid biosynthesis</keyword>
<keyword id="KW-0276">Fatty acid metabolism</keyword>
<keyword id="KW-0444">Lipid biosynthesis</keyword>
<keyword id="KW-0443">Lipid metabolism</keyword>
<keyword id="KW-0596">Phosphopantetheine</keyword>
<keyword id="KW-0597">Phosphoprotein</keyword>
<keyword id="KW-0934">Plastid</keyword>
<keyword id="KW-1185">Reference proteome</keyword>
<reference key="1">
    <citation type="journal article" date="2007" name="Mol. Genet. Genomics">
        <title>Chloroplast genomes of the diatoms Phaeodactylum tricornutum and Thalassiosira pseudonana: comparison with other plastid genomes of the red lineage.</title>
        <authorList>
            <person name="Oudot-Le Secq M.-P."/>
            <person name="Grimwood J."/>
            <person name="Shapiro H."/>
            <person name="Armbrust E.V."/>
            <person name="Bowler C."/>
            <person name="Green B.R."/>
        </authorList>
    </citation>
    <scope>NUCLEOTIDE SEQUENCE [LARGE SCALE GENOMIC DNA]</scope>
    <source>
        <strain>CCAP 1055/1</strain>
    </source>
</reference>
<feature type="chain" id="PRO_0000275160" description="Acyl carrier protein">
    <location>
        <begin position="1"/>
        <end position="76"/>
    </location>
</feature>
<feature type="domain" description="Carrier" evidence="2">
    <location>
        <begin position="2"/>
        <end position="76"/>
    </location>
</feature>
<feature type="modified residue" description="O-(pantetheine 4'-phosphoryl)serine" evidence="2">
    <location>
        <position position="37"/>
    </location>
</feature>
<protein>
    <recommendedName>
        <fullName evidence="1">Acyl carrier protein</fullName>
        <shortName evidence="1">ACP</shortName>
    </recommendedName>
</protein>
<dbReference type="EMBL" id="EF067920">
    <property type="protein sequence ID" value="ABK20656.1"/>
    <property type="molecule type" value="Genomic_DNA"/>
</dbReference>
<dbReference type="RefSeq" id="YP_874433.1">
    <property type="nucleotide sequence ID" value="NC_008588.1"/>
</dbReference>
<dbReference type="SMR" id="A0T0F8"/>
<dbReference type="FunCoup" id="A0T0F8">
    <property type="interactions" value="77"/>
</dbReference>
<dbReference type="STRING" id="556484.A0T0F8"/>
<dbReference type="GeneID" id="4524607"/>
<dbReference type="InParanoid" id="A0T0F8"/>
<dbReference type="UniPathway" id="UPA00094"/>
<dbReference type="Proteomes" id="UP000000759">
    <property type="component" value="Chloroplast"/>
</dbReference>
<dbReference type="GO" id="GO:0009507">
    <property type="term" value="C:chloroplast"/>
    <property type="evidence" value="ECO:0007669"/>
    <property type="project" value="UniProtKB-SubCell"/>
</dbReference>
<dbReference type="GO" id="GO:0000035">
    <property type="term" value="F:acyl binding"/>
    <property type="evidence" value="ECO:0007669"/>
    <property type="project" value="TreeGrafter"/>
</dbReference>
<dbReference type="GO" id="GO:0000036">
    <property type="term" value="F:acyl carrier activity"/>
    <property type="evidence" value="ECO:0007669"/>
    <property type="project" value="UniProtKB-UniRule"/>
</dbReference>
<dbReference type="Gene3D" id="1.10.1200.10">
    <property type="entry name" value="ACP-like"/>
    <property type="match status" value="1"/>
</dbReference>
<dbReference type="HAMAP" id="MF_01217">
    <property type="entry name" value="Acyl_carrier"/>
    <property type="match status" value="1"/>
</dbReference>
<dbReference type="InterPro" id="IPR003231">
    <property type="entry name" value="ACP"/>
</dbReference>
<dbReference type="InterPro" id="IPR036736">
    <property type="entry name" value="ACP-like_sf"/>
</dbReference>
<dbReference type="InterPro" id="IPR009081">
    <property type="entry name" value="PP-bd_ACP"/>
</dbReference>
<dbReference type="InterPro" id="IPR006162">
    <property type="entry name" value="Ppantetheine_attach_site"/>
</dbReference>
<dbReference type="NCBIfam" id="TIGR00517">
    <property type="entry name" value="acyl_carrier"/>
    <property type="match status" value="1"/>
</dbReference>
<dbReference type="NCBIfam" id="NF002148">
    <property type="entry name" value="PRK00982.1-2"/>
    <property type="match status" value="1"/>
</dbReference>
<dbReference type="NCBIfam" id="NF002150">
    <property type="entry name" value="PRK00982.1-4"/>
    <property type="match status" value="1"/>
</dbReference>
<dbReference type="PANTHER" id="PTHR20863">
    <property type="entry name" value="ACYL CARRIER PROTEIN"/>
    <property type="match status" value="1"/>
</dbReference>
<dbReference type="PANTHER" id="PTHR20863:SF76">
    <property type="entry name" value="CARRIER DOMAIN-CONTAINING PROTEIN"/>
    <property type="match status" value="1"/>
</dbReference>
<dbReference type="Pfam" id="PF00550">
    <property type="entry name" value="PP-binding"/>
    <property type="match status" value="1"/>
</dbReference>
<dbReference type="SUPFAM" id="SSF47336">
    <property type="entry name" value="ACP-like"/>
    <property type="match status" value="1"/>
</dbReference>
<dbReference type="PROSITE" id="PS50075">
    <property type="entry name" value="CARRIER"/>
    <property type="match status" value="1"/>
</dbReference>
<dbReference type="PROSITE" id="PS00012">
    <property type="entry name" value="PHOSPHOPANTETHEINE"/>
    <property type="match status" value="1"/>
</dbReference>